<reference key="1">
    <citation type="journal article" date="2008" name="Genome Biol.">
        <title>A genomic analysis of the archaeal system Ignicoccus hospitalis-Nanoarchaeum equitans.</title>
        <authorList>
            <person name="Podar M."/>
            <person name="Anderson I."/>
            <person name="Makarova K.S."/>
            <person name="Elkins J.G."/>
            <person name="Ivanova N."/>
            <person name="Wall M.A."/>
            <person name="Lykidis A."/>
            <person name="Mavromatis K."/>
            <person name="Sun H."/>
            <person name="Hudson M.E."/>
            <person name="Chen W."/>
            <person name="Deciu C."/>
            <person name="Hutchison D."/>
            <person name="Eads J.R."/>
            <person name="Anderson A."/>
            <person name="Fernandes F."/>
            <person name="Szeto E."/>
            <person name="Lapidus A."/>
            <person name="Kyrpides N.C."/>
            <person name="Saier M.H. Jr."/>
            <person name="Richardson P.M."/>
            <person name="Rachel R."/>
            <person name="Huber H."/>
            <person name="Eisen J.A."/>
            <person name="Koonin E.V."/>
            <person name="Keller M."/>
            <person name="Stetter K.O."/>
        </authorList>
    </citation>
    <scope>NUCLEOTIDE SEQUENCE [LARGE SCALE GENOMIC DNA]</scope>
    <source>
        <strain>KIN4/I / DSM 18386 / JCM 14125</strain>
    </source>
</reference>
<protein>
    <recommendedName>
        <fullName evidence="1">Phosphoribosyl-AMP cyclohydrolase</fullName>
        <shortName evidence="1">PRA-CH</shortName>
        <ecNumber evidence="1">3.5.4.19</ecNumber>
    </recommendedName>
</protein>
<organism>
    <name type="scientific">Ignicoccus hospitalis (strain KIN4/I / DSM 18386 / JCM 14125)</name>
    <dbReference type="NCBI Taxonomy" id="453591"/>
    <lineage>
        <taxon>Archaea</taxon>
        <taxon>Thermoproteota</taxon>
        <taxon>Thermoprotei</taxon>
        <taxon>Desulfurococcales</taxon>
        <taxon>Desulfurococcaceae</taxon>
        <taxon>Ignicoccus</taxon>
    </lineage>
</organism>
<proteinExistence type="inferred from homology"/>
<feature type="chain" id="PRO_1000063406" description="Phosphoribosyl-AMP cyclohydrolase">
    <location>
        <begin position="1"/>
        <end position="129"/>
    </location>
</feature>
<feature type="binding site" evidence="1">
    <location>
        <position position="86"/>
    </location>
    <ligand>
        <name>Mg(2+)</name>
        <dbReference type="ChEBI" id="CHEBI:18420"/>
    </ligand>
</feature>
<feature type="binding site" evidence="1">
    <location>
        <position position="87"/>
    </location>
    <ligand>
        <name>Zn(2+)</name>
        <dbReference type="ChEBI" id="CHEBI:29105"/>
        <note>ligand shared between dimeric partners</note>
    </ligand>
</feature>
<feature type="binding site" evidence="1">
    <location>
        <position position="88"/>
    </location>
    <ligand>
        <name>Mg(2+)</name>
        <dbReference type="ChEBI" id="CHEBI:18420"/>
    </ligand>
</feature>
<feature type="binding site" evidence="1">
    <location>
        <position position="90"/>
    </location>
    <ligand>
        <name>Mg(2+)</name>
        <dbReference type="ChEBI" id="CHEBI:18420"/>
    </ligand>
</feature>
<feature type="binding site" evidence="1">
    <location>
        <position position="104"/>
    </location>
    <ligand>
        <name>Zn(2+)</name>
        <dbReference type="ChEBI" id="CHEBI:29105"/>
        <note>ligand shared between dimeric partners</note>
    </ligand>
</feature>
<feature type="binding site" evidence="1">
    <location>
        <position position="111"/>
    </location>
    <ligand>
        <name>Zn(2+)</name>
        <dbReference type="ChEBI" id="CHEBI:29105"/>
        <note>ligand shared between dimeric partners</note>
    </ligand>
</feature>
<name>HIS3_IGNH4</name>
<keyword id="KW-0028">Amino-acid biosynthesis</keyword>
<keyword id="KW-0963">Cytoplasm</keyword>
<keyword id="KW-0368">Histidine biosynthesis</keyword>
<keyword id="KW-0378">Hydrolase</keyword>
<keyword id="KW-0460">Magnesium</keyword>
<keyword id="KW-0479">Metal-binding</keyword>
<keyword id="KW-1185">Reference proteome</keyword>
<keyword id="KW-0862">Zinc</keyword>
<dbReference type="EC" id="3.5.4.19" evidence="1"/>
<dbReference type="EMBL" id="CP000816">
    <property type="protein sequence ID" value="ABU81744.1"/>
    <property type="molecule type" value="Genomic_DNA"/>
</dbReference>
<dbReference type="SMR" id="A8A9Z2"/>
<dbReference type="STRING" id="453591.Igni_0562"/>
<dbReference type="KEGG" id="iho:Igni_0562"/>
<dbReference type="eggNOG" id="arCOG02676">
    <property type="taxonomic scope" value="Archaea"/>
</dbReference>
<dbReference type="HOGENOM" id="CLU_048577_5_1_2"/>
<dbReference type="OrthoDB" id="5853at2157"/>
<dbReference type="PhylomeDB" id="A8A9Z2"/>
<dbReference type="UniPathway" id="UPA00031">
    <property type="reaction ID" value="UER00008"/>
</dbReference>
<dbReference type="Proteomes" id="UP000000262">
    <property type="component" value="Chromosome"/>
</dbReference>
<dbReference type="GO" id="GO:0005737">
    <property type="term" value="C:cytoplasm"/>
    <property type="evidence" value="ECO:0007669"/>
    <property type="project" value="UniProtKB-SubCell"/>
</dbReference>
<dbReference type="GO" id="GO:0000287">
    <property type="term" value="F:magnesium ion binding"/>
    <property type="evidence" value="ECO:0007669"/>
    <property type="project" value="UniProtKB-UniRule"/>
</dbReference>
<dbReference type="GO" id="GO:0004635">
    <property type="term" value="F:phosphoribosyl-AMP cyclohydrolase activity"/>
    <property type="evidence" value="ECO:0007669"/>
    <property type="project" value="UniProtKB-UniRule"/>
</dbReference>
<dbReference type="GO" id="GO:0008270">
    <property type="term" value="F:zinc ion binding"/>
    <property type="evidence" value="ECO:0007669"/>
    <property type="project" value="UniProtKB-UniRule"/>
</dbReference>
<dbReference type="GO" id="GO:0000105">
    <property type="term" value="P:L-histidine biosynthetic process"/>
    <property type="evidence" value="ECO:0007669"/>
    <property type="project" value="UniProtKB-UniRule"/>
</dbReference>
<dbReference type="FunFam" id="3.10.20.810:FF:000001">
    <property type="entry name" value="Histidine biosynthesis bifunctional protein HisIE"/>
    <property type="match status" value="1"/>
</dbReference>
<dbReference type="Gene3D" id="3.10.20.810">
    <property type="entry name" value="Phosphoribosyl-AMP cyclohydrolase"/>
    <property type="match status" value="1"/>
</dbReference>
<dbReference type="HAMAP" id="MF_01021">
    <property type="entry name" value="HisI"/>
    <property type="match status" value="1"/>
</dbReference>
<dbReference type="InterPro" id="IPR026660">
    <property type="entry name" value="PRA-CH"/>
</dbReference>
<dbReference type="InterPro" id="IPR002496">
    <property type="entry name" value="PRib_AMP_CycHydrolase_dom"/>
</dbReference>
<dbReference type="InterPro" id="IPR038019">
    <property type="entry name" value="PRib_AMP_CycHydrolase_sf"/>
</dbReference>
<dbReference type="NCBIfam" id="NF000768">
    <property type="entry name" value="PRK00051.1"/>
    <property type="match status" value="1"/>
</dbReference>
<dbReference type="PANTHER" id="PTHR42945">
    <property type="entry name" value="HISTIDINE BIOSYNTHESIS BIFUNCTIONAL PROTEIN"/>
    <property type="match status" value="1"/>
</dbReference>
<dbReference type="PANTHER" id="PTHR42945:SF1">
    <property type="entry name" value="HISTIDINE BIOSYNTHESIS BIFUNCTIONAL PROTEIN HIS7"/>
    <property type="match status" value="1"/>
</dbReference>
<dbReference type="Pfam" id="PF01502">
    <property type="entry name" value="PRA-CH"/>
    <property type="match status" value="1"/>
</dbReference>
<dbReference type="SUPFAM" id="SSF141734">
    <property type="entry name" value="HisI-like"/>
    <property type="match status" value="1"/>
</dbReference>
<comment type="function">
    <text evidence="1">Catalyzes the hydrolysis of the adenine ring of phosphoribosyl-AMP.</text>
</comment>
<comment type="catalytic activity">
    <reaction evidence="1">
        <text>1-(5-phospho-beta-D-ribosyl)-5'-AMP + H2O = 1-(5-phospho-beta-D-ribosyl)-5-[(5-phospho-beta-D-ribosylamino)methylideneamino]imidazole-4-carboxamide</text>
        <dbReference type="Rhea" id="RHEA:20049"/>
        <dbReference type="ChEBI" id="CHEBI:15377"/>
        <dbReference type="ChEBI" id="CHEBI:58435"/>
        <dbReference type="ChEBI" id="CHEBI:59457"/>
        <dbReference type="EC" id="3.5.4.19"/>
    </reaction>
</comment>
<comment type="cofactor">
    <cofactor evidence="1">
        <name>Mg(2+)</name>
        <dbReference type="ChEBI" id="CHEBI:18420"/>
    </cofactor>
    <text evidence="1">Binds 1 Mg(2+) ion per subunit.</text>
</comment>
<comment type="cofactor">
    <cofactor evidence="1">
        <name>Zn(2+)</name>
        <dbReference type="ChEBI" id="CHEBI:29105"/>
    </cofactor>
    <text evidence="1">Binds 1 zinc ion per subunit.</text>
</comment>
<comment type="pathway">
    <text evidence="1">Amino-acid biosynthesis; L-histidine biosynthesis; L-histidine from 5-phospho-alpha-D-ribose 1-diphosphate: step 3/9.</text>
</comment>
<comment type="subunit">
    <text evidence="1">Homodimer.</text>
</comment>
<comment type="subcellular location">
    <subcellularLocation>
        <location evidence="1">Cytoplasm</location>
    </subcellularLocation>
</comment>
<comment type="similarity">
    <text evidence="1">Belongs to the PRA-CH family.</text>
</comment>
<accession>A8A9Z2</accession>
<gene>
    <name evidence="1" type="primary">hisI</name>
    <name type="ordered locus">Igni_0562</name>
</gene>
<evidence type="ECO:0000255" key="1">
    <source>
        <dbReference type="HAMAP-Rule" id="MF_01021"/>
    </source>
</evidence>
<sequence length="129" mass="14823">MMRVSEEEAKRIAERLNYRWPDRTVVAVAQEYKSGKVLMVASMNKEAVIKTLTTGIVHYWSKSRKELWVKGATSGHVQVLEKFYYDCDADSVLLVVRQASLIACHEGYRSCFHYKVEEGGVKVEEPSYE</sequence>